<dbReference type="EC" id="2.7.7.6" evidence="1"/>
<dbReference type="EMBL" id="CU928164">
    <property type="protein sequence ID" value="CAR20478.1"/>
    <property type="molecule type" value="Genomic_DNA"/>
</dbReference>
<dbReference type="RefSeq" id="WP_000263098.1">
    <property type="nucleotide sequence ID" value="NC_011750.1"/>
</dbReference>
<dbReference type="RefSeq" id="YP_002410246.1">
    <property type="nucleotide sequence ID" value="NC_011750.1"/>
</dbReference>
<dbReference type="SMR" id="B7NRR5"/>
<dbReference type="STRING" id="585057.ECIAI39_4372"/>
<dbReference type="GeneID" id="93777907"/>
<dbReference type="KEGG" id="ect:ECIAI39_4372"/>
<dbReference type="PATRIC" id="fig|585057.6.peg.4518"/>
<dbReference type="HOGENOM" id="CLU_000524_4_3_6"/>
<dbReference type="Proteomes" id="UP000000749">
    <property type="component" value="Chromosome"/>
</dbReference>
<dbReference type="GO" id="GO:0000428">
    <property type="term" value="C:DNA-directed RNA polymerase complex"/>
    <property type="evidence" value="ECO:0007669"/>
    <property type="project" value="UniProtKB-KW"/>
</dbReference>
<dbReference type="GO" id="GO:0003677">
    <property type="term" value="F:DNA binding"/>
    <property type="evidence" value="ECO:0007669"/>
    <property type="project" value="UniProtKB-UniRule"/>
</dbReference>
<dbReference type="GO" id="GO:0003899">
    <property type="term" value="F:DNA-directed RNA polymerase activity"/>
    <property type="evidence" value="ECO:0007669"/>
    <property type="project" value="UniProtKB-UniRule"/>
</dbReference>
<dbReference type="GO" id="GO:0032549">
    <property type="term" value="F:ribonucleoside binding"/>
    <property type="evidence" value="ECO:0007669"/>
    <property type="project" value="InterPro"/>
</dbReference>
<dbReference type="GO" id="GO:0006351">
    <property type="term" value="P:DNA-templated transcription"/>
    <property type="evidence" value="ECO:0007669"/>
    <property type="project" value="UniProtKB-UniRule"/>
</dbReference>
<dbReference type="CDD" id="cd00653">
    <property type="entry name" value="RNA_pol_B_RPB2"/>
    <property type="match status" value="1"/>
</dbReference>
<dbReference type="FunFam" id="2.30.150.10:FF:000001">
    <property type="entry name" value="DNA-directed RNA polymerase subunit beta"/>
    <property type="match status" value="1"/>
</dbReference>
<dbReference type="FunFam" id="2.40.270.10:FF:000003">
    <property type="entry name" value="DNA-directed RNA polymerase subunit beta"/>
    <property type="match status" value="1"/>
</dbReference>
<dbReference type="FunFam" id="2.40.270.10:FF:000004">
    <property type="entry name" value="DNA-directed RNA polymerase subunit beta"/>
    <property type="match status" value="1"/>
</dbReference>
<dbReference type="FunFam" id="2.40.50.100:FF:000006">
    <property type="entry name" value="DNA-directed RNA polymerase subunit beta"/>
    <property type="match status" value="1"/>
</dbReference>
<dbReference type="FunFam" id="2.40.50.150:FF:000001">
    <property type="entry name" value="DNA-directed RNA polymerase subunit beta"/>
    <property type="match status" value="1"/>
</dbReference>
<dbReference type="FunFam" id="3.90.1100.10:FF:000002">
    <property type="entry name" value="DNA-directed RNA polymerase subunit beta"/>
    <property type="match status" value="1"/>
</dbReference>
<dbReference type="FunFam" id="3.90.1110.10:FF:000001">
    <property type="entry name" value="DNA-directed RNA polymerase subunit beta"/>
    <property type="match status" value="1"/>
</dbReference>
<dbReference type="FunFam" id="3.90.1110.10:FF:000004">
    <property type="entry name" value="DNA-directed RNA polymerase subunit beta"/>
    <property type="match status" value="1"/>
</dbReference>
<dbReference type="FunFam" id="3.90.1800.10:FF:000001">
    <property type="entry name" value="DNA-directed RNA polymerase subunit beta"/>
    <property type="match status" value="1"/>
</dbReference>
<dbReference type="Gene3D" id="2.40.50.100">
    <property type="match status" value="1"/>
</dbReference>
<dbReference type="Gene3D" id="2.40.50.150">
    <property type="match status" value="1"/>
</dbReference>
<dbReference type="Gene3D" id="3.90.1100.10">
    <property type="match status" value="2"/>
</dbReference>
<dbReference type="Gene3D" id="6.10.140.1670">
    <property type="match status" value="1"/>
</dbReference>
<dbReference type="Gene3D" id="2.30.150.10">
    <property type="entry name" value="DNA-directed RNA polymerase, beta subunit, external 1 domain"/>
    <property type="match status" value="1"/>
</dbReference>
<dbReference type="Gene3D" id="2.40.270.10">
    <property type="entry name" value="DNA-directed RNA polymerase, subunit 2, domain 6"/>
    <property type="match status" value="1"/>
</dbReference>
<dbReference type="Gene3D" id="3.90.1800.10">
    <property type="entry name" value="RNA polymerase alpha subunit dimerisation domain"/>
    <property type="match status" value="1"/>
</dbReference>
<dbReference type="Gene3D" id="3.90.1110.10">
    <property type="entry name" value="RNA polymerase Rpb2, domain 2"/>
    <property type="match status" value="1"/>
</dbReference>
<dbReference type="HAMAP" id="MF_01321">
    <property type="entry name" value="RNApol_bact_RpoB"/>
    <property type="match status" value="1"/>
</dbReference>
<dbReference type="InterPro" id="IPR042107">
    <property type="entry name" value="DNA-dir_RNA_pol_bsu_ext_1_sf"/>
</dbReference>
<dbReference type="InterPro" id="IPR019462">
    <property type="entry name" value="DNA-dir_RNA_pol_bsu_external_1"/>
</dbReference>
<dbReference type="InterPro" id="IPR015712">
    <property type="entry name" value="DNA-dir_RNA_pol_su2"/>
</dbReference>
<dbReference type="InterPro" id="IPR007120">
    <property type="entry name" value="DNA-dir_RNAP_su2_dom"/>
</dbReference>
<dbReference type="InterPro" id="IPR037033">
    <property type="entry name" value="DNA-dir_RNAP_su2_hyb_sf"/>
</dbReference>
<dbReference type="InterPro" id="IPR010243">
    <property type="entry name" value="RNA_pol_bsu_bac"/>
</dbReference>
<dbReference type="InterPro" id="IPR007121">
    <property type="entry name" value="RNA_pol_bsu_CS"/>
</dbReference>
<dbReference type="InterPro" id="IPR007644">
    <property type="entry name" value="RNA_pol_bsu_protrusion"/>
</dbReference>
<dbReference type="InterPro" id="IPR007642">
    <property type="entry name" value="RNA_pol_Rpb2_2"/>
</dbReference>
<dbReference type="InterPro" id="IPR037034">
    <property type="entry name" value="RNA_pol_Rpb2_2_sf"/>
</dbReference>
<dbReference type="InterPro" id="IPR007645">
    <property type="entry name" value="RNA_pol_Rpb2_3"/>
</dbReference>
<dbReference type="InterPro" id="IPR007641">
    <property type="entry name" value="RNA_pol_Rpb2_7"/>
</dbReference>
<dbReference type="InterPro" id="IPR014724">
    <property type="entry name" value="RNA_pol_RPB2_OB-fold"/>
</dbReference>
<dbReference type="NCBIfam" id="NF001616">
    <property type="entry name" value="PRK00405.1"/>
    <property type="match status" value="1"/>
</dbReference>
<dbReference type="NCBIfam" id="TIGR02013">
    <property type="entry name" value="rpoB"/>
    <property type="match status" value="1"/>
</dbReference>
<dbReference type="PANTHER" id="PTHR20856">
    <property type="entry name" value="DNA-DIRECTED RNA POLYMERASE I SUBUNIT 2"/>
    <property type="match status" value="1"/>
</dbReference>
<dbReference type="Pfam" id="PF04563">
    <property type="entry name" value="RNA_pol_Rpb2_1"/>
    <property type="match status" value="1"/>
</dbReference>
<dbReference type="Pfam" id="PF04561">
    <property type="entry name" value="RNA_pol_Rpb2_2"/>
    <property type="match status" value="2"/>
</dbReference>
<dbReference type="Pfam" id="PF04565">
    <property type="entry name" value="RNA_pol_Rpb2_3"/>
    <property type="match status" value="1"/>
</dbReference>
<dbReference type="Pfam" id="PF10385">
    <property type="entry name" value="RNA_pol_Rpb2_45"/>
    <property type="match status" value="1"/>
</dbReference>
<dbReference type="Pfam" id="PF00562">
    <property type="entry name" value="RNA_pol_Rpb2_6"/>
    <property type="match status" value="1"/>
</dbReference>
<dbReference type="Pfam" id="PF04560">
    <property type="entry name" value="RNA_pol_Rpb2_7"/>
    <property type="match status" value="1"/>
</dbReference>
<dbReference type="SUPFAM" id="SSF64484">
    <property type="entry name" value="beta and beta-prime subunits of DNA dependent RNA-polymerase"/>
    <property type="match status" value="1"/>
</dbReference>
<dbReference type="PROSITE" id="PS01166">
    <property type="entry name" value="RNA_POL_BETA"/>
    <property type="match status" value="1"/>
</dbReference>
<protein>
    <recommendedName>
        <fullName evidence="1">DNA-directed RNA polymerase subunit beta</fullName>
        <shortName evidence="1">RNAP subunit beta</shortName>
        <ecNumber evidence="1">2.7.7.6</ecNumber>
    </recommendedName>
    <alternativeName>
        <fullName evidence="1">RNA polymerase subunit beta</fullName>
    </alternativeName>
    <alternativeName>
        <fullName evidence="1">Transcriptase subunit beta</fullName>
    </alternativeName>
</protein>
<keyword id="KW-0007">Acetylation</keyword>
<keyword id="KW-0240">DNA-directed RNA polymerase</keyword>
<keyword id="KW-0548">Nucleotidyltransferase</keyword>
<keyword id="KW-0804">Transcription</keyword>
<keyword id="KW-0808">Transferase</keyword>
<feature type="chain" id="PRO_1000141689" description="DNA-directed RNA polymerase subunit beta">
    <location>
        <begin position="1"/>
        <end position="1342"/>
    </location>
</feature>
<feature type="modified residue" description="N6-acetyllysine" evidence="1">
    <location>
        <position position="1022"/>
    </location>
</feature>
<feature type="modified residue" description="N6-acetyllysine" evidence="1">
    <location>
        <position position="1200"/>
    </location>
</feature>
<organism>
    <name type="scientific">Escherichia coli O7:K1 (strain IAI39 / ExPEC)</name>
    <dbReference type="NCBI Taxonomy" id="585057"/>
    <lineage>
        <taxon>Bacteria</taxon>
        <taxon>Pseudomonadati</taxon>
        <taxon>Pseudomonadota</taxon>
        <taxon>Gammaproteobacteria</taxon>
        <taxon>Enterobacterales</taxon>
        <taxon>Enterobacteriaceae</taxon>
        <taxon>Escherichia</taxon>
    </lineage>
</organism>
<gene>
    <name evidence="1" type="primary">rpoB</name>
    <name type="ordered locus">ECIAI39_4372</name>
</gene>
<name>RPOB_ECO7I</name>
<proteinExistence type="inferred from homology"/>
<accession>B7NRR5</accession>
<sequence length="1342" mass="150632">MVYSYTEKKRIRKDFGKRPQVLDVPYLLSIQLDSFQKFIEQDPEGQYGLEAAFRSVFPIQSYSGNSELQYVSYRLGEPVFDVQECQIRGVTYSAPLRVKLRLVIYEREAPEGTVKDIKEQEVYMGEIPLMTDNGTFVINGTERVIVSQLHRSPGVFFDSDKGKTHSSGKVLYNARIIPYRGSWLDFEFDPKDNLFVRIDRRRKLPATIILRALNYTTEQILDLFFEKVIFEIRDNKLQMELVPERLRGETASFDIEANGKVYVEKGRRITARHIRQLEKDDVKLIEVPVEYIAGKVVAKDYIDESTGELICAANMELSLDLLAKLSQSGHKRIETLFTNDLDHGPYISETLRVDPTNDRLSALVEIYRMMRPGEPPTREAAESLFENLFFSEDRYDLSAVGRMKFNRSLLREEIEGSGILSKDDIIDVMKKLIDIRNGKGEVDDIDHLGNRRIRSVGEMAENQFRVGLVRVERAVKERLSLGDLDTLMPQDMINAKPISAAVKEFFGSSQLSQFMDQNNPLSEITHKRRISALGPGGLTRERAGFEVRDVHPTHYGRVCPIETPEGPNIGLINSLSVYAQTNEYGFLETPYRKVTDGVVTDEIHYLSAIEEGNYVIAQANSNLDEEGHFVEDLVTCRSKGESSLFSRDQVDYMDVSTQQVVSVGASLIPFLEHDDANRALMGANMQRQAVPTLRADKPLVGTGMERAVAVDSGVTAVAKRGGVVQYVDASRIVIKVNEDEMYPGEAGIDIYNLTKYTRSNQNTCINQMPCVSLGEPVERGDVLADGPSTDLGELALGQNMRVAFMPWNGYNFEDSILVSERVVQEDRFTTIHIQELACVSRDTKLGPEEITADIPNVGEAALSKLDESGIVYIGAEVTGGDILVGKVTPKGETQLTPEEKLLRAIFGEKASDVKDSSLRVPNGVSGTVIDVQVFTRDGVEKDKRALEIEEMQLKQAKKDLSEELQILEAGLFSRIRAVLVAGGVEAEKLDKLPRDRWLELGLTDEEKQNQLEQLAEQYDELKHEFEKKLEAKRRKITQGDDLAPGVLKIVKVYLAVKRRIQPGDKMAGRHGNKGVISKINPIEDMPYDENGTPVDIVLNPLGVPSRMNIGQILETHLGMAAKGIGDKINAMLKQQQEVAKLREFIQRAYDLGADVRQKVDLSTFSDEEVMRLAENLRKGMPIATPVFDGAKEAEIKELLKLGDLPTSGQIRLYDGRTGEQFERPVTVGYMYMLKLNHLVDDKMHARSTGSYSLVTQQPLGGKAQFGGQRFGEMEVWALEAYGAAYTLQEMLTVKSDDVNGRTKMYKNIVDGNHQMEPGMPESFNVLLKEIRSLGINIELEDE</sequence>
<reference key="1">
    <citation type="journal article" date="2009" name="PLoS Genet.">
        <title>Organised genome dynamics in the Escherichia coli species results in highly diverse adaptive paths.</title>
        <authorList>
            <person name="Touchon M."/>
            <person name="Hoede C."/>
            <person name="Tenaillon O."/>
            <person name="Barbe V."/>
            <person name="Baeriswyl S."/>
            <person name="Bidet P."/>
            <person name="Bingen E."/>
            <person name="Bonacorsi S."/>
            <person name="Bouchier C."/>
            <person name="Bouvet O."/>
            <person name="Calteau A."/>
            <person name="Chiapello H."/>
            <person name="Clermont O."/>
            <person name="Cruveiller S."/>
            <person name="Danchin A."/>
            <person name="Diard M."/>
            <person name="Dossat C."/>
            <person name="Karoui M.E."/>
            <person name="Frapy E."/>
            <person name="Garry L."/>
            <person name="Ghigo J.M."/>
            <person name="Gilles A.M."/>
            <person name="Johnson J."/>
            <person name="Le Bouguenec C."/>
            <person name="Lescat M."/>
            <person name="Mangenot S."/>
            <person name="Martinez-Jehanne V."/>
            <person name="Matic I."/>
            <person name="Nassif X."/>
            <person name="Oztas S."/>
            <person name="Petit M.A."/>
            <person name="Pichon C."/>
            <person name="Rouy Z."/>
            <person name="Ruf C.S."/>
            <person name="Schneider D."/>
            <person name="Tourret J."/>
            <person name="Vacherie B."/>
            <person name="Vallenet D."/>
            <person name="Medigue C."/>
            <person name="Rocha E.P.C."/>
            <person name="Denamur E."/>
        </authorList>
    </citation>
    <scope>NUCLEOTIDE SEQUENCE [LARGE SCALE GENOMIC DNA]</scope>
    <source>
        <strain>IAI39 / ExPEC</strain>
    </source>
</reference>
<evidence type="ECO:0000255" key="1">
    <source>
        <dbReference type="HAMAP-Rule" id="MF_01321"/>
    </source>
</evidence>
<comment type="function">
    <text evidence="1">DNA-dependent RNA polymerase catalyzes the transcription of DNA into RNA using the four ribonucleoside triphosphates as substrates.</text>
</comment>
<comment type="catalytic activity">
    <reaction evidence="1">
        <text>RNA(n) + a ribonucleoside 5'-triphosphate = RNA(n+1) + diphosphate</text>
        <dbReference type="Rhea" id="RHEA:21248"/>
        <dbReference type="Rhea" id="RHEA-COMP:14527"/>
        <dbReference type="Rhea" id="RHEA-COMP:17342"/>
        <dbReference type="ChEBI" id="CHEBI:33019"/>
        <dbReference type="ChEBI" id="CHEBI:61557"/>
        <dbReference type="ChEBI" id="CHEBI:140395"/>
        <dbReference type="EC" id="2.7.7.6"/>
    </reaction>
</comment>
<comment type="subunit">
    <text evidence="1">The RNAP catalytic core consists of 2 alpha, 1 beta, 1 beta' and 1 omega subunit. When a sigma factor is associated with the core the holoenzyme is formed, which can initiate transcription.</text>
</comment>
<comment type="similarity">
    <text evidence="1">Belongs to the RNA polymerase beta chain family.</text>
</comment>